<name>CLPP_NITEU</name>
<organism>
    <name type="scientific">Nitrosomonas europaea (strain ATCC 19718 / CIP 103999 / KCTC 2705 / NBRC 14298)</name>
    <dbReference type="NCBI Taxonomy" id="228410"/>
    <lineage>
        <taxon>Bacteria</taxon>
        <taxon>Pseudomonadati</taxon>
        <taxon>Pseudomonadota</taxon>
        <taxon>Betaproteobacteria</taxon>
        <taxon>Nitrosomonadales</taxon>
        <taxon>Nitrosomonadaceae</taxon>
        <taxon>Nitrosomonas</taxon>
    </lineage>
</organism>
<feature type="chain" id="PRO_0000179603" description="ATP-dependent Clp protease proteolytic subunit">
    <location>
        <begin position="1"/>
        <end position="214"/>
    </location>
</feature>
<feature type="active site" description="Nucleophile" evidence="1">
    <location>
        <position position="114"/>
    </location>
</feature>
<feature type="active site" evidence="1">
    <location>
        <position position="139"/>
    </location>
</feature>
<protein>
    <recommendedName>
        <fullName evidence="1">ATP-dependent Clp protease proteolytic subunit</fullName>
        <ecNumber evidence="1">3.4.21.92</ecNumber>
    </recommendedName>
    <alternativeName>
        <fullName evidence="1">Endopeptidase Clp</fullName>
    </alternativeName>
</protein>
<comment type="function">
    <text evidence="1">Cleaves peptides in various proteins in a process that requires ATP hydrolysis. Has a chymotrypsin-like activity. Plays a major role in the degradation of misfolded proteins.</text>
</comment>
<comment type="catalytic activity">
    <reaction evidence="1">
        <text>Hydrolysis of proteins to small peptides in the presence of ATP and magnesium. alpha-casein is the usual test substrate. In the absence of ATP, only oligopeptides shorter than five residues are hydrolyzed (such as succinyl-Leu-Tyr-|-NHMec, and Leu-Tyr-Leu-|-Tyr-Trp, in which cleavage of the -Tyr-|-Leu- and -Tyr-|-Trp bonds also occurs).</text>
        <dbReference type="EC" id="3.4.21.92"/>
    </reaction>
</comment>
<comment type="subunit">
    <text evidence="1">Fourteen ClpP subunits assemble into 2 heptameric rings which stack back to back to give a disk-like structure with a central cavity, resembling the structure of eukaryotic proteasomes.</text>
</comment>
<comment type="subcellular location">
    <subcellularLocation>
        <location evidence="1">Cytoplasm</location>
    </subcellularLocation>
</comment>
<comment type="similarity">
    <text evidence="1">Belongs to the peptidase S14 family.</text>
</comment>
<proteinExistence type="inferred from homology"/>
<dbReference type="EC" id="3.4.21.92" evidence="1"/>
<dbReference type="EMBL" id="AL954747">
    <property type="protein sequence ID" value="CAD83942.1"/>
    <property type="molecule type" value="Genomic_DNA"/>
</dbReference>
<dbReference type="RefSeq" id="WP_011110683.1">
    <property type="nucleotide sequence ID" value="NC_004757.1"/>
</dbReference>
<dbReference type="SMR" id="Q82Y57"/>
<dbReference type="STRING" id="228410.NE0031"/>
<dbReference type="MEROPS" id="S14.001"/>
<dbReference type="GeneID" id="87103239"/>
<dbReference type="KEGG" id="neu:NE0031"/>
<dbReference type="eggNOG" id="COG0740">
    <property type="taxonomic scope" value="Bacteria"/>
</dbReference>
<dbReference type="HOGENOM" id="CLU_058707_3_2_4"/>
<dbReference type="OrthoDB" id="9802800at2"/>
<dbReference type="PhylomeDB" id="Q82Y57"/>
<dbReference type="Proteomes" id="UP000001416">
    <property type="component" value="Chromosome"/>
</dbReference>
<dbReference type="GO" id="GO:0005737">
    <property type="term" value="C:cytoplasm"/>
    <property type="evidence" value="ECO:0007669"/>
    <property type="project" value="UniProtKB-SubCell"/>
</dbReference>
<dbReference type="GO" id="GO:0009368">
    <property type="term" value="C:endopeptidase Clp complex"/>
    <property type="evidence" value="ECO:0007669"/>
    <property type="project" value="TreeGrafter"/>
</dbReference>
<dbReference type="GO" id="GO:0004176">
    <property type="term" value="F:ATP-dependent peptidase activity"/>
    <property type="evidence" value="ECO:0007669"/>
    <property type="project" value="InterPro"/>
</dbReference>
<dbReference type="GO" id="GO:0051117">
    <property type="term" value="F:ATPase binding"/>
    <property type="evidence" value="ECO:0007669"/>
    <property type="project" value="TreeGrafter"/>
</dbReference>
<dbReference type="GO" id="GO:0004252">
    <property type="term" value="F:serine-type endopeptidase activity"/>
    <property type="evidence" value="ECO:0007669"/>
    <property type="project" value="UniProtKB-UniRule"/>
</dbReference>
<dbReference type="GO" id="GO:0006515">
    <property type="term" value="P:protein quality control for misfolded or incompletely synthesized proteins"/>
    <property type="evidence" value="ECO:0007669"/>
    <property type="project" value="TreeGrafter"/>
</dbReference>
<dbReference type="CDD" id="cd07017">
    <property type="entry name" value="S14_ClpP_2"/>
    <property type="match status" value="1"/>
</dbReference>
<dbReference type="FunFam" id="3.90.226.10:FF:000001">
    <property type="entry name" value="ATP-dependent Clp protease proteolytic subunit"/>
    <property type="match status" value="1"/>
</dbReference>
<dbReference type="Gene3D" id="3.90.226.10">
    <property type="entry name" value="2-enoyl-CoA Hydratase, Chain A, domain 1"/>
    <property type="match status" value="1"/>
</dbReference>
<dbReference type="HAMAP" id="MF_00444">
    <property type="entry name" value="ClpP"/>
    <property type="match status" value="1"/>
</dbReference>
<dbReference type="InterPro" id="IPR001907">
    <property type="entry name" value="ClpP"/>
</dbReference>
<dbReference type="InterPro" id="IPR029045">
    <property type="entry name" value="ClpP/crotonase-like_dom_sf"/>
</dbReference>
<dbReference type="InterPro" id="IPR023562">
    <property type="entry name" value="ClpP/TepA"/>
</dbReference>
<dbReference type="InterPro" id="IPR033135">
    <property type="entry name" value="ClpP_His_AS"/>
</dbReference>
<dbReference type="InterPro" id="IPR018215">
    <property type="entry name" value="ClpP_Ser_AS"/>
</dbReference>
<dbReference type="NCBIfam" id="TIGR00493">
    <property type="entry name" value="clpP"/>
    <property type="match status" value="1"/>
</dbReference>
<dbReference type="NCBIfam" id="NF001368">
    <property type="entry name" value="PRK00277.1"/>
    <property type="match status" value="1"/>
</dbReference>
<dbReference type="NCBIfam" id="NF009205">
    <property type="entry name" value="PRK12553.1"/>
    <property type="match status" value="1"/>
</dbReference>
<dbReference type="PANTHER" id="PTHR10381">
    <property type="entry name" value="ATP-DEPENDENT CLP PROTEASE PROTEOLYTIC SUBUNIT"/>
    <property type="match status" value="1"/>
</dbReference>
<dbReference type="PANTHER" id="PTHR10381:SF70">
    <property type="entry name" value="ATP-DEPENDENT CLP PROTEASE PROTEOLYTIC SUBUNIT"/>
    <property type="match status" value="1"/>
</dbReference>
<dbReference type="Pfam" id="PF00574">
    <property type="entry name" value="CLP_protease"/>
    <property type="match status" value="1"/>
</dbReference>
<dbReference type="PRINTS" id="PR00127">
    <property type="entry name" value="CLPPROTEASEP"/>
</dbReference>
<dbReference type="SUPFAM" id="SSF52096">
    <property type="entry name" value="ClpP/crotonase"/>
    <property type="match status" value="1"/>
</dbReference>
<dbReference type="PROSITE" id="PS00382">
    <property type="entry name" value="CLP_PROTEASE_HIS"/>
    <property type="match status" value="1"/>
</dbReference>
<dbReference type="PROSITE" id="PS00381">
    <property type="entry name" value="CLP_PROTEASE_SER"/>
    <property type="match status" value="1"/>
</dbReference>
<sequence length="214" mass="23434">MQPMFDRERNGLDTTGLGLIPMVIETSGRGERAYDIYSRLLRERIIFLVGPVTETSANLVIAQLLFLESENSEKDIFLYINSPGGLVTAGLAVYDTIQFIKPDVSTLCVGQAASMGAFLLTAGAKGKRYCLPNSRVMIHQPLGGFQGQASDIEIHAKEILALKSRLNEIMAKHTGQTVKAIERDTDRDNFLGAEAAVKYGLVDAVLTSREVKQE</sequence>
<reference key="1">
    <citation type="journal article" date="2003" name="J. Bacteriol.">
        <title>Complete genome sequence of the ammonia-oxidizing bacterium and obligate chemolithoautotroph Nitrosomonas europaea.</title>
        <authorList>
            <person name="Chain P."/>
            <person name="Lamerdin J.E."/>
            <person name="Larimer F.W."/>
            <person name="Regala W."/>
            <person name="Lao V."/>
            <person name="Land M.L."/>
            <person name="Hauser L."/>
            <person name="Hooper A.B."/>
            <person name="Klotz M.G."/>
            <person name="Norton J."/>
            <person name="Sayavedra-Soto L.A."/>
            <person name="Arciero D.M."/>
            <person name="Hommes N.G."/>
            <person name="Whittaker M.M."/>
            <person name="Arp D.J."/>
        </authorList>
    </citation>
    <scope>NUCLEOTIDE SEQUENCE [LARGE SCALE GENOMIC DNA]</scope>
    <source>
        <strain>ATCC 19718 / CIP 103999 / KCTC 2705 / NBRC 14298</strain>
    </source>
</reference>
<evidence type="ECO:0000255" key="1">
    <source>
        <dbReference type="HAMAP-Rule" id="MF_00444"/>
    </source>
</evidence>
<keyword id="KW-0963">Cytoplasm</keyword>
<keyword id="KW-0378">Hydrolase</keyword>
<keyword id="KW-0645">Protease</keyword>
<keyword id="KW-1185">Reference proteome</keyword>
<keyword id="KW-0720">Serine protease</keyword>
<gene>
    <name evidence="1" type="primary">clpP</name>
    <name type="ordered locus">NE0031</name>
</gene>
<accession>Q82Y57</accession>